<evidence type="ECO:0000250" key="1">
    <source>
        <dbReference type="UniProtKB" id="A0A1C9J6A7"/>
    </source>
</evidence>
<evidence type="ECO:0000250" key="2">
    <source>
        <dbReference type="UniProtKB" id="Q40577"/>
    </source>
</evidence>
<evidence type="ECO:0000255" key="3"/>
<evidence type="ECO:0000269" key="4">
    <source>
    </source>
</evidence>
<evidence type="ECO:0000303" key="5">
    <source>
    </source>
</evidence>
<evidence type="ECO:0000305" key="6"/>
<reference key="1">
    <citation type="journal article" date="2017" name="PLoS ONE">
        <title>Terpene synthases from Cannabis sativa.</title>
        <authorList>
            <person name="Booth J.K."/>
            <person name="Page J.E."/>
            <person name="Bohlmann J."/>
        </authorList>
    </citation>
    <scope>NUCLEOTIDE SEQUENCE [MRNA]</scope>
    <scope>FUNCTION</scope>
    <scope>CATALYTIC ACTIVITY</scope>
    <scope>PATHWAY</scope>
    <scope>TISSUE SPECIFICITY</scope>
    <source>
        <strain>cv. Finola</strain>
    </source>
</reference>
<keyword id="KW-0150">Chloroplast</keyword>
<keyword id="KW-0456">Lyase</keyword>
<keyword id="KW-0460">Magnesium</keyword>
<keyword id="KW-0479">Metal-binding</keyword>
<keyword id="KW-0934">Plastid</keyword>
<keyword id="KW-0809">Transit peptide</keyword>
<organism>
    <name type="scientific">Cannabis sativa</name>
    <name type="common">Hemp</name>
    <name type="synonym">Marijuana</name>
    <dbReference type="NCBI Taxonomy" id="3483"/>
    <lineage>
        <taxon>Eukaryota</taxon>
        <taxon>Viridiplantae</taxon>
        <taxon>Streptophyta</taxon>
        <taxon>Embryophyta</taxon>
        <taxon>Tracheophyta</taxon>
        <taxon>Spermatophyta</taxon>
        <taxon>Magnoliopsida</taxon>
        <taxon>eudicotyledons</taxon>
        <taxon>Gunneridae</taxon>
        <taxon>Pentapetalae</taxon>
        <taxon>rosids</taxon>
        <taxon>fabids</taxon>
        <taxon>Rosales</taxon>
        <taxon>Cannabaceae</taxon>
        <taxon>Cannabis</taxon>
    </lineage>
</organism>
<protein>
    <recommendedName>
        <fullName evidence="5">Myrcene synthase TPS3FN, chloroplastic</fullName>
        <ecNumber evidence="4">4.2.3.15</ecNumber>
    </recommendedName>
    <alternativeName>
        <fullName evidence="5">Terpene synthase 3FN</fullName>
        <shortName evidence="5">CsTPS3FN</shortName>
    </alternativeName>
</protein>
<name>TS3FN_CANSA</name>
<gene>
    <name evidence="5" type="primary">TPS3FN</name>
</gene>
<dbReference type="EC" id="4.2.3.15" evidence="4"/>
<dbReference type="EMBL" id="KY014561">
    <property type="protein sequence ID" value="ARE72257.1"/>
    <property type="molecule type" value="mRNA"/>
</dbReference>
<dbReference type="SMR" id="A0A1V0QSF8"/>
<dbReference type="UniPathway" id="UPA00213"/>
<dbReference type="Proteomes" id="UP000596661">
    <property type="component" value="Unplaced"/>
</dbReference>
<dbReference type="GO" id="GO:0009507">
    <property type="term" value="C:chloroplast"/>
    <property type="evidence" value="ECO:0007669"/>
    <property type="project" value="UniProtKB-SubCell"/>
</dbReference>
<dbReference type="GO" id="GO:0000287">
    <property type="term" value="F:magnesium ion binding"/>
    <property type="evidence" value="ECO:0007669"/>
    <property type="project" value="InterPro"/>
</dbReference>
<dbReference type="GO" id="GO:0010333">
    <property type="term" value="F:terpene synthase activity"/>
    <property type="evidence" value="ECO:0007669"/>
    <property type="project" value="InterPro"/>
</dbReference>
<dbReference type="GO" id="GO:0016102">
    <property type="term" value="P:diterpenoid biosynthetic process"/>
    <property type="evidence" value="ECO:0007669"/>
    <property type="project" value="InterPro"/>
</dbReference>
<dbReference type="CDD" id="cd00684">
    <property type="entry name" value="Terpene_cyclase_plant_C1"/>
    <property type="match status" value="1"/>
</dbReference>
<dbReference type="FunFam" id="1.10.600.10:FF:000007">
    <property type="entry name" value="Isoprene synthase, chloroplastic"/>
    <property type="match status" value="1"/>
</dbReference>
<dbReference type="FunFam" id="1.50.10.130:FF:000001">
    <property type="entry name" value="Isoprene synthase, chloroplastic"/>
    <property type="match status" value="1"/>
</dbReference>
<dbReference type="Gene3D" id="1.10.600.10">
    <property type="entry name" value="Farnesyl Diphosphate Synthase"/>
    <property type="match status" value="1"/>
</dbReference>
<dbReference type="Gene3D" id="1.50.10.130">
    <property type="entry name" value="Terpene synthase, N-terminal domain"/>
    <property type="match status" value="1"/>
</dbReference>
<dbReference type="InterPro" id="IPR008949">
    <property type="entry name" value="Isoprenoid_synthase_dom_sf"/>
</dbReference>
<dbReference type="InterPro" id="IPR034741">
    <property type="entry name" value="Terpene_cyclase-like_1_C"/>
</dbReference>
<dbReference type="InterPro" id="IPR044814">
    <property type="entry name" value="Terpene_cyclase_plant_C1"/>
</dbReference>
<dbReference type="InterPro" id="IPR001906">
    <property type="entry name" value="Terpene_synth_N"/>
</dbReference>
<dbReference type="InterPro" id="IPR036965">
    <property type="entry name" value="Terpene_synth_N_sf"/>
</dbReference>
<dbReference type="InterPro" id="IPR050148">
    <property type="entry name" value="Terpene_synthase-like"/>
</dbReference>
<dbReference type="InterPro" id="IPR005630">
    <property type="entry name" value="Terpene_synthase_metal-bd"/>
</dbReference>
<dbReference type="InterPro" id="IPR008930">
    <property type="entry name" value="Terpenoid_cyclase/PrenylTrfase"/>
</dbReference>
<dbReference type="PANTHER" id="PTHR31225">
    <property type="entry name" value="OS04G0344100 PROTEIN-RELATED"/>
    <property type="match status" value="1"/>
</dbReference>
<dbReference type="PANTHER" id="PTHR31225:SF9">
    <property type="entry name" value="TERPENE SYNTHASE 10"/>
    <property type="match status" value="1"/>
</dbReference>
<dbReference type="Pfam" id="PF01397">
    <property type="entry name" value="Terpene_synth"/>
    <property type="match status" value="1"/>
</dbReference>
<dbReference type="Pfam" id="PF03936">
    <property type="entry name" value="Terpene_synth_C"/>
    <property type="match status" value="1"/>
</dbReference>
<dbReference type="SFLD" id="SFLDS00005">
    <property type="entry name" value="Isoprenoid_Synthase_Type_I"/>
    <property type="match status" value="1"/>
</dbReference>
<dbReference type="SFLD" id="SFLDG01019">
    <property type="entry name" value="Terpene_Cyclase_Like_1_C_Termi"/>
    <property type="match status" value="1"/>
</dbReference>
<dbReference type="SUPFAM" id="SSF48239">
    <property type="entry name" value="Terpenoid cyclases/Protein prenyltransferases"/>
    <property type="match status" value="1"/>
</dbReference>
<dbReference type="SUPFAM" id="SSF48576">
    <property type="entry name" value="Terpenoid synthases"/>
    <property type="match status" value="1"/>
</dbReference>
<sequence>MHCMAVHQFSPSIVSSLPTISTYNNNHFCRFFTPKTSISPISKTKSKSSTCYPIQCTVVNNSSPSSTIVRRSANYEPPIWSFDYIQSLSTQYKGESYTRQLNKLKKEVKRMLLRMEINSLALLELIDTLQRLGISYHFKNEINTILKKKYNDNYINNNIITNPNYNNLYATALEFRLLRQHGYTVPQEIFNAFKDKRGKFKTSLSDDIMGVLCLYEASFYAMKHENILEEARIFSTKCLKKYMEKIENEEEKKILLLNDNNINSNLLLINHAFELPLHWRITRSEARWFIDEIYEKKQDMNSTLFEFAKLDFNIVQSTHQEDLQHLSRWWRDCKLGGKLNFARDRLMEAFLWDVGLKFEGEFSYFRRTNARLFVLITIIDDIYDVYGTLEELELFTSAVERWDVKLINELPDYMKMPFFVLHNTINEMGFDVLVEQNFVNIEYLKKSWVDLCKCYLQEAKWYYSGYQPTLEEYTELGWLSIGASVILMHAYFCFTNPITKQDLKSLQLQHHYPNIIKQACLITRLADDLGTSSDELNRGDVPKSIQCYMYDNNATEDEAREHIKFLISETWKDMNKKDEDESCLSENFVEVCKNMARTALFIYENGDGHGSQNSLSKERISTLIITPINIPK</sequence>
<feature type="transit peptide" description="Chloroplast" evidence="3">
    <location>
        <begin position="1"/>
        <end position="55"/>
    </location>
</feature>
<feature type="chain" id="PRO_0000460896" description="Myrcene synthase TPS3FN, chloroplastic">
    <location>
        <begin position="56"/>
        <end position="632"/>
    </location>
</feature>
<feature type="short sequence motif" description="DDXXD motif" evidence="2">
    <location>
        <begin position="380"/>
        <end position="384"/>
    </location>
</feature>
<feature type="binding site" evidence="2">
    <location>
        <position position="343"/>
    </location>
    <ligand>
        <name>(2E)-geranyl diphosphate</name>
        <dbReference type="ChEBI" id="CHEBI:58057"/>
    </ligand>
</feature>
<feature type="binding site" evidence="2">
    <location>
        <position position="380"/>
    </location>
    <ligand>
        <name>(2E)-geranyl diphosphate</name>
        <dbReference type="ChEBI" id="CHEBI:58057"/>
    </ligand>
</feature>
<feature type="binding site" evidence="2">
    <location>
        <position position="380"/>
    </location>
    <ligand>
        <name>Mg(2+)</name>
        <dbReference type="ChEBI" id="CHEBI:18420"/>
        <label>1</label>
    </ligand>
</feature>
<feature type="binding site" evidence="2">
    <location>
        <position position="380"/>
    </location>
    <ligand>
        <name>Mg(2+)</name>
        <dbReference type="ChEBI" id="CHEBI:18420"/>
        <label>2</label>
    </ligand>
</feature>
<feature type="binding site" evidence="2">
    <location>
        <position position="384"/>
    </location>
    <ligand>
        <name>(2E)-geranyl diphosphate</name>
        <dbReference type="ChEBI" id="CHEBI:58057"/>
    </ligand>
</feature>
<feature type="binding site" evidence="2">
    <location>
        <position position="384"/>
    </location>
    <ligand>
        <name>Mg(2+)</name>
        <dbReference type="ChEBI" id="CHEBI:18420"/>
        <label>1</label>
    </ligand>
</feature>
<feature type="binding site" evidence="2">
    <location>
        <position position="384"/>
    </location>
    <ligand>
        <name>Mg(2+)</name>
        <dbReference type="ChEBI" id="CHEBI:18420"/>
        <label>2</label>
    </ligand>
</feature>
<feature type="binding site" evidence="2">
    <location>
        <position position="524"/>
    </location>
    <ligand>
        <name>(2E)-geranyl diphosphate</name>
        <dbReference type="ChEBI" id="CHEBI:58057"/>
    </ligand>
</feature>
<feature type="binding site" evidence="2">
    <location>
        <position position="527"/>
    </location>
    <ligand>
        <name>(2E)-geranyl diphosphate</name>
        <dbReference type="ChEBI" id="CHEBI:58057"/>
    </ligand>
</feature>
<feature type="binding site" evidence="2">
    <location>
        <position position="527"/>
    </location>
    <ligand>
        <name>Mg(2+)</name>
        <dbReference type="ChEBI" id="CHEBI:18420"/>
        <label>3</label>
    </ligand>
</feature>
<feature type="binding site" evidence="2">
    <location>
        <position position="531"/>
    </location>
    <ligand>
        <name>Mg(2+)</name>
        <dbReference type="ChEBI" id="CHEBI:18420"/>
        <label>3</label>
    </ligand>
</feature>
<feature type="binding site" evidence="2">
    <location>
        <position position="535"/>
    </location>
    <ligand>
        <name>Mg(2+)</name>
        <dbReference type="ChEBI" id="CHEBI:18420"/>
        <label>3</label>
    </ligand>
</feature>
<accession>A0A1V0QSF8</accession>
<comment type="function">
    <text evidence="4">Involved in monoterpene (C10) olefins biosynthesis, constituants of cannabinoids and terpenoids-rich resins (PubMed:28355238). Catalyzes strictly the conversion of (2E)-geranyl diphosphate to beta-myrcene (PubMed:28355238).</text>
</comment>
<comment type="catalytic activity">
    <reaction evidence="4">
        <text>(2E)-geranyl diphosphate = beta-myrcene + diphosphate</text>
        <dbReference type="Rhea" id="RHEA:16965"/>
        <dbReference type="ChEBI" id="CHEBI:17221"/>
        <dbReference type="ChEBI" id="CHEBI:33019"/>
        <dbReference type="ChEBI" id="CHEBI:58057"/>
        <dbReference type="EC" id="4.2.3.15"/>
    </reaction>
    <physiologicalReaction direction="left-to-right" evidence="4">
        <dbReference type="Rhea" id="RHEA:16966"/>
    </physiologicalReaction>
</comment>
<comment type="cofactor">
    <cofactor evidence="1">
        <name>Mg(2+)</name>
        <dbReference type="ChEBI" id="CHEBI:18420"/>
    </cofactor>
    <cofactor evidence="1">
        <name>Mn(2+)</name>
        <dbReference type="ChEBI" id="CHEBI:29035"/>
    </cofactor>
    <text evidence="1">Binds 3 Mg(2+) or Mn(2+) ions per subunit.</text>
</comment>
<comment type="pathway">
    <text evidence="4">Secondary metabolite biosynthesis; terpenoid biosynthesis.</text>
</comment>
<comment type="subcellular location">
    <subcellularLocation>
        <location evidence="3">Plastid</location>
        <location evidence="3">Chloroplast</location>
    </subcellularLocation>
</comment>
<comment type="tissue specificity">
    <text evidence="4">Expressed in glandular trichomes two to four weeks after flowering onset.</text>
</comment>
<comment type="domain">
    <text evidence="2">The Asp-Asp-Xaa-Xaa-Asp/Glu (DDXXD/E) motif is important for the catalytic activity, presumably through binding to Mg(2+).</text>
</comment>
<comment type="similarity">
    <text evidence="6">Belongs to the terpene synthase family. Tpsb subfamily.</text>
</comment>
<proteinExistence type="evidence at protein level"/>